<organism>
    <name type="scientific">Synechococcus sp. (strain ATCC 27144 / PCC 6301 / SAUG 1402/1)</name>
    <name type="common">Anacystis nidulans</name>
    <dbReference type="NCBI Taxonomy" id="269084"/>
    <lineage>
        <taxon>Bacteria</taxon>
        <taxon>Bacillati</taxon>
        <taxon>Cyanobacteriota</taxon>
        <taxon>Cyanophyceae</taxon>
        <taxon>Synechococcales</taxon>
        <taxon>Synechococcaceae</taxon>
        <taxon>Synechococcus</taxon>
    </lineage>
</organism>
<protein>
    <recommendedName>
        <fullName evidence="1">Ribosome-binding factor A</fullName>
    </recommendedName>
</protein>
<feature type="chain" id="PRO_0000102755" description="Ribosome-binding factor A">
    <location>
        <begin position="1"/>
        <end position="137"/>
    </location>
</feature>
<keyword id="KW-0963">Cytoplasm</keyword>
<keyword id="KW-0690">Ribosome biogenesis</keyword>
<dbReference type="EMBL" id="AP008231">
    <property type="protein sequence ID" value="BAD79348.1"/>
    <property type="molecule type" value="Genomic_DNA"/>
</dbReference>
<dbReference type="RefSeq" id="WP_011243470.1">
    <property type="nucleotide sequence ID" value="NZ_CP085785.1"/>
</dbReference>
<dbReference type="SMR" id="Q5N2X2"/>
<dbReference type="GeneID" id="72429173"/>
<dbReference type="KEGG" id="syc:syc1158_d"/>
<dbReference type="eggNOG" id="COG0858">
    <property type="taxonomic scope" value="Bacteria"/>
</dbReference>
<dbReference type="Proteomes" id="UP000001175">
    <property type="component" value="Chromosome"/>
</dbReference>
<dbReference type="GO" id="GO:0005829">
    <property type="term" value="C:cytosol"/>
    <property type="evidence" value="ECO:0007669"/>
    <property type="project" value="TreeGrafter"/>
</dbReference>
<dbReference type="GO" id="GO:0043024">
    <property type="term" value="F:ribosomal small subunit binding"/>
    <property type="evidence" value="ECO:0007669"/>
    <property type="project" value="TreeGrafter"/>
</dbReference>
<dbReference type="GO" id="GO:0030490">
    <property type="term" value="P:maturation of SSU-rRNA"/>
    <property type="evidence" value="ECO:0007669"/>
    <property type="project" value="UniProtKB-UniRule"/>
</dbReference>
<dbReference type="Gene3D" id="3.30.300.20">
    <property type="match status" value="1"/>
</dbReference>
<dbReference type="HAMAP" id="MF_00003">
    <property type="entry name" value="RbfA"/>
    <property type="match status" value="1"/>
</dbReference>
<dbReference type="InterPro" id="IPR015946">
    <property type="entry name" value="KH_dom-like_a/b"/>
</dbReference>
<dbReference type="InterPro" id="IPR000238">
    <property type="entry name" value="RbfA"/>
</dbReference>
<dbReference type="InterPro" id="IPR023799">
    <property type="entry name" value="RbfA_dom_sf"/>
</dbReference>
<dbReference type="InterPro" id="IPR020053">
    <property type="entry name" value="Ribosome-bd_factorA_CS"/>
</dbReference>
<dbReference type="NCBIfam" id="TIGR00082">
    <property type="entry name" value="rbfA"/>
    <property type="match status" value="1"/>
</dbReference>
<dbReference type="PANTHER" id="PTHR33515">
    <property type="entry name" value="RIBOSOME-BINDING FACTOR A, CHLOROPLASTIC-RELATED"/>
    <property type="match status" value="1"/>
</dbReference>
<dbReference type="PANTHER" id="PTHR33515:SF1">
    <property type="entry name" value="RIBOSOME-BINDING FACTOR A, CHLOROPLASTIC-RELATED"/>
    <property type="match status" value="1"/>
</dbReference>
<dbReference type="Pfam" id="PF02033">
    <property type="entry name" value="RBFA"/>
    <property type="match status" value="1"/>
</dbReference>
<dbReference type="SUPFAM" id="SSF89919">
    <property type="entry name" value="Ribosome-binding factor A, RbfA"/>
    <property type="match status" value="1"/>
</dbReference>
<dbReference type="PROSITE" id="PS01319">
    <property type="entry name" value="RBFA"/>
    <property type="match status" value="1"/>
</dbReference>
<accession>Q5N2X2</accession>
<sequence length="137" mass="15007">MATNRRVERVASLIKREVSQMLMSGIKDDRVGAGMVSVTDVVVSGDLQHTKIFVSIYGTPEAKAETMEGLKSAASYVRSELGQRVRLRRTPEVIFVEDKGLERGTQVISLLEQLTREREAREAAQAAAGVVDSTEDA</sequence>
<proteinExistence type="inferred from homology"/>
<name>RBFA_SYNP6</name>
<evidence type="ECO:0000255" key="1">
    <source>
        <dbReference type="HAMAP-Rule" id="MF_00003"/>
    </source>
</evidence>
<gene>
    <name evidence="1" type="primary">rbfA</name>
    <name type="ordered locus">syc1158_d</name>
</gene>
<comment type="function">
    <text evidence="1">One of several proteins that assist in the late maturation steps of the functional core of the 30S ribosomal subunit. Associates with free 30S ribosomal subunits (but not with 30S subunits that are part of 70S ribosomes or polysomes). Required for efficient processing of 16S rRNA. May interact with the 5'-terminal helix region of 16S rRNA.</text>
</comment>
<comment type="subunit">
    <text evidence="1">Monomer. Binds 30S ribosomal subunits, but not 50S ribosomal subunits or 70S ribosomes.</text>
</comment>
<comment type="subcellular location">
    <subcellularLocation>
        <location evidence="1">Cytoplasm</location>
    </subcellularLocation>
</comment>
<comment type="similarity">
    <text evidence="1">Belongs to the RbfA family.</text>
</comment>
<reference key="1">
    <citation type="journal article" date="2007" name="Photosyn. Res.">
        <title>Complete nucleotide sequence of the freshwater unicellular cyanobacterium Synechococcus elongatus PCC 6301 chromosome: gene content and organization.</title>
        <authorList>
            <person name="Sugita C."/>
            <person name="Ogata K."/>
            <person name="Shikata M."/>
            <person name="Jikuya H."/>
            <person name="Takano J."/>
            <person name="Furumichi M."/>
            <person name="Kanehisa M."/>
            <person name="Omata T."/>
            <person name="Sugiura M."/>
            <person name="Sugita M."/>
        </authorList>
    </citation>
    <scope>NUCLEOTIDE SEQUENCE [LARGE SCALE GENOMIC DNA]</scope>
    <source>
        <strain>ATCC 27144 / PCC 6301 / SAUG 1402/1</strain>
    </source>
</reference>